<evidence type="ECO:0000255" key="1">
    <source>
        <dbReference type="HAMAP-Rule" id="MF_01416"/>
    </source>
</evidence>
<comment type="function">
    <text evidence="1">F(1)F(0) ATP synthase produces ATP from ADP in the presence of a proton or sodium gradient. F-type ATPases consist of two structural domains, F(1) containing the extramembraneous catalytic core and F(0) containing the membrane proton channel, linked together by a central stalk and a peripheral stalk. During catalysis, ATP synthesis in the catalytic domain of F(1) is coupled via a rotary mechanism of the central stalk subunits to proton translocation.</text>
</comment>
<comment type="function">
    <text evidence="1">This protein is part of the stalk that links CF(0) to CF(1). It either transmits conformational changes from CF(0) to CF(1) or is implicated in proton conduction.</text>
</comment>
<comment type="subunit">
    <text evidence="1">F-type ATPases have 2 components, F(1) - the catalytic core - and F(0) - the membrane proton channel. F(1) has five subunits: alpha(3), beta(3), gamma(1), delta(1), epsilon(1). F(0) has three main subunits: a(1), b(2) and c(10-14). The alpha and beta chains form an alternating ring which encloses part of the gamma chain. F(1) is attached to F(0) by a central stalk formed by the gamma and epsilon chains, while a peripheral stalk is formed by the delta and b chains.</text>
</comment>
<comment type="subcellular location">
    <subcellularLocation>
        <location evidence="1">Cell inner membrane</location>
        <topology evidence="1">Peripheral membrane protein</topology>
    </subcellularLocation>
</comment>
<comment type="similarity">
    <text evidence="1">Belongs to the ATPase delta chain family.</text>
</comment>
<sequence>MSEFVTVARPYAKAAFDFAVEHQAVERWQNMLAFTAQVTRNEQIAELLSGAVAPETMSTTFIAVCGDQLDEPAQNFIRVMAENGRLLVLPEVLQQFIQLRASLESTVDVEVSSARALNDEQLAKIAAAMEKRLSRKVKLNCKIDKSVMAGVVIRAGDMVIDGSVRGRLERLADVLQS</sequence>
<proteinExistence type="inferred from homology"/>
<organism>
    <name type="scientific">Yersinia pestis bv. Antiqua (strain Angola)</name>
    <dbReference type="NCBI Taxonomy" id="349746"/>
    <lineage>
        <taxon>Bacteria</taxon>
        <taxon>Pseudomonadati</taxon>
        <taxon>Pseudomonadota</taxon>
        <taxon>Gammaproteobacteria</taxon>
        <taxon>Enterobacterales</taxon>
        <taxon>Yersiniaceae</taxon>
        <taxon>Yersinia</taxon>
    </lineage>
</organism>
<dbReference type="EMBL" id="CP000901">
    <property type="protein sequence ID" value="ABX87448.1"/>
    <property type="molecule type" value="Genomic_DNA"/>
</dbReference>
<dbReference type="RefSeq" id="WP_002220760.1">
    <property type="nucleotide sequence ID" value="NZ_CP009935.1"/>
</dbReference>
<dbReference type="SMR" id="A9R5U2"/>
<dbReference type="GeneID" id="57974600"/>
<dbReference type="KEGG" id="ypg:YpAngola_A4205"/>
<dbReference type="PATRIC" id="fig|349746.12.peg.942"/>
<dbReference type="GO" id="GO:0005886">
    <property type="term" value="C:plasma membrane"/>
    <property type="evidence" value="ECO:0007669"/>
    <property type="project" value="UniProtKB-SubCell"/>
</dbReference>
<dbReference type="GO" id="GO:0045259">
    <property type="term" value="C:proton-transporting ATP synthase complex"/>
    <property type="evidence" value="ECO:0007669"/>
    <property type="project" value="UniProtKB-KW"/>
</dbReference>
<dbReference type="GO" id="GO:0046933">
    <property type="term" value="F:proton-transporting ATP synthase activity, rotational mechanism"/>
    <property type="evidence" value="ECO:0007669"/>
    <property type="project" value="UniProtKB-UniRule"/>
</dbReference>
<dbReference type="FunFam" id="1.10.520.20:FF:000001">
    <property type="entry name" value="ATP synthase subunit delta"/>
    <property type="match status" value="1"/>
</dbReference>
<dbReference type="Gene3D" id="1.10.520.20">
    <property type="entry name" value="N-terminal domain of the delta subunit of the F1F0-ATP synthase"/>
    <property type="match status" value="1"/>
</dbReference>
<dbReference type="HAMAP" id="MF_01416">
    <property type="entry name" value="ATP_synth_delta_bact"/>
    <property type="match status" value="1"/>
</dbReference>
<dbReference type="InterPro" id="IPR026015">
    <property type="entry name" value="ATP_synth_OSCP/delta_N_sf"/>
</dbReference>
<dbReference type="InterPro" id="IPR020781">
    <property type="entry name" value="ATPase_OSCP/d_CS"/>
</dbReference>
<dbReference type="InterPro" id="IPR000711">
    <property type="entry name" value="ATPase_OSCP/dsu"/>
</dbReference>
<dbReference type="NCBIfam" id="TIGR01145">
    <property type="entry name" value="ATP_synt_delta"/>
    <property type="match status" value="1"/>
</dbReference>
<dbReference type="NCBIfam" id="NF004402">
    <property type="entry name" value="PRK05758.2-2"/>
    <property type="match status" value="1"/>
</dbReference>
<dbReference type="NCBIfam" id="NF004404">
    <property type="entry name" value="PRK05758.2-5"/>
    <property type="match status" value="1"/>
</dbReference>
<dbReference type="PANTHER" id="PTHR11910">
    <property type="entry name" value="ATP SYNTHASE DELTA CHAIN"/>
    <property type="match status" value="1"/>
</dbReference>
<dbReference type="Pfam" id="PF00213">
    <property type="entry name" value="OSCP"/>
    <property type="match status" value="1"/>
</dbReference>
<dbReference type="PRINTS" id="PR00125">
    <property type="entry name" value="ATPASEDELTA"/>
</dbReference>
<dbReference type="SUPFAM" id="SSF47928">
    <property type="entry name" value="N-terminal domain of the delta subunit of the F1F0-ATP synthase"/>
    <property type="match status" value="1"/>
</dbReference>
<dbReference type="PROSITE" id="PS00389">
    <property type="entry name" value="ATPASE_DELTA"/>
    <property type="match status" value="1"/>
</dbReference>
<name>ATPD_YERPG</name>
<protein>
    <recommendedName>
        <fullName evidence="1">ATP synthase subunit delta</fullName>
    </recommendedName>
    <alternativeName>
        <fullName evidence="1">ATP synthase F(1) sector subunit delta</fullName>
    </alternativeName>
    <alternativeName>
        <fullName evidence="1">F-type ATPase subunit delta</fullName>
        <shortName evidence="1">F-ATPase subunit delta</shortName>
    </alternativeName>
</protein>
<reference key="1">
    <citation type="journal article" date="2010" name="J. Bacteriol.">
        <title>Genome sequence of the deep-rooted Yersinia pestis strain Angola reveals new insights into the evolution and pangenome of the plague bacterium.</title>
        <authorList>
            <person name="Eppinger M."/>
            <person name="Worsham P.L."/>
            <person name="Nikolich M.P."/>
            <person name="Riley D.R."/>
            <person name="Sebastian Y."/>
            <person name="Mou S."/>
            <person name="Achtman M."/>
            <person name="Lindler L.E."/>
            <person name="Ravel J."/>
        </authorList>
    </citation>
    <scope>NUCLEOTIDE SEQUENCE [LARGE SCALE GENOMIC DNA]</scope>
    <source>
        <strain>Angola</strain>
    </source>
</reference>
<feature type="chain" id="PRO_0000371202" description="ATP synthase subunit delta">
    <location>
        <begin position="1"/>
        <end position="177"/>
    </location>
</feature>
<accession>A9R5U2</accession>
<keyword id="KW-0066">ATP synthesis</keyword>
<keyword id="KW-0997">Cell inner membrane</keyword>
<keyword id="KW-1003">Cell membrane</keyword>
<keyword id="KW-0139">CF(1)</keyword>
<keyword id="KW-0375">Hydrogen ion transport</keyword>
<keyword id="KW-0406">Ion transport</keyword>
<keyword id="KW-0472">Membrane</keyword>
<keyword id="KW-0813">Transport</keyword>
<gene>
    <name evidence="1" type="primary">atpH</name>
    <name type="ordered locus">YpAngola_A4205</name>
</gene>